<proteinExistence type="evidence at transcript level"/>
<name>VLTF2_VAR67</name>
<dbReference type="EMBL" id="X69198">
    <property type="protein sequence ID" value="CAA49045.1"/>
    <property type="molecule type" value="Genomic_DNA"/>
</dbReference>
<dbReference type="PIR" id="B36848">
    <property type="entry name" value="B36848"/>
</dbReference>
<dbReference type="RefSeq" id="NP_042148.1">
    <property type="nucleotide sequence ID" value="NC_001611.1"/>
</dbReference>
<dbReference type="GeneID" id="1486495"/>
<dbReference type="KEGG" id="vg:1486495"/>
<dbReference type="Proteomes" id="UP000002060">
    <property type="component" value="Segment"/>
</dbReference>
<dbReference type="GO" id="GO:0008270">
    <property type="term" value="F:zinc ion binding"/>
    <property type="evidence" value="ECO:0007669"/>
    <property type="project" value="InterPro"/>
</dbReference>
<dbReference type="InterPro" id="IPR004975">
    <property type="entry name" value="Poxvirus_VLTF2"/>
</dbReference>
<dbReference type="InterPro" id="IPR010507">
    <property type="entry name" value="Znf_MYM"/>
</dbReference>
<dbReference type="Pfam" id="PF03295">
    <property type="entry name" value="Pox_TAA1"/>
    <property type="match status" value="1"/>
</dbReference>
<dbReference type="Pfam" id="PF06467">
    <property type="entry name" value="zf-FCS"/>
    <property type="match status" value="1"/>
</dbReference>
<evidence type="ECO:0000250" key="1">
    <source>
        <dbReference type="UniProtKB" id="P07610"/>
    </source>
</evidence>
<evidence type="ECO:0000305" key="2"/>
<organism>
    <name type="scientific">Variola virus (isolate Human/India/Ind3/1967)</name>
    <name type="common">VARV</name>
    <name type="synonym">Smallpox virus</name>
    <dbReference type="NCBI Taxonomy" id="587200"/>
    <lineage>
        <taxon>Viruses</taxon>
        <taxon>Varidnaviria</taxon>
        <taxon>Bamfordvirae</taxon>
        <taxon>Nucleocytoviricota</taxon>
        <taxon>Pokkesviricetes</taxon>
        <taxon>Chitovirales</taxon>
        <taxon>Poxviridae</taxon>
        <taxon>Chordopoxvirinae</taxon>
        <taxon>Orthopoxvirus</taxon>
        <taxon>Variola virus</taxon>
    </lineage>
</organism>
<comment type="function">
    <text evidence="1">Acts with RNA polymerase to initiate transcription from late gene promoters.</text>
</comment>
<comment type="subunit">
    <text evidence="1">Interacts with itself. Interacts with the late transcription factors VLTF-1/OPG093.</text>
</comment>
<comment type="developmental stage">
    <text>Intermediate stages of infection.</text>
</comment>
<comment type="similarity">
    <text evidence="2">Belongs to the orthopoxvirus VLTF-2/OPG126 family.</text>
</comment>
<keyword id="KW-0010">Activator</keyword>
<keyword id="KW-1185">Reference proteome</keyword>
<keyword id="KW-0804">Transcription</keyword>
<keyword id="KW-0805">Transcription regulation</keyword>
<reference key="1">
    <citation type="journal article" date="1993" name="FEBS Lett.">
        <title>Genes of variola and vaccinia viruses necessary to overcome the host protective mechanisms.</title>
        <authorList>
            <person name="Shchelkunov S.N."/>
            <person name="Blinov V.M."/>
            <person name="Sandakhchiev L.S."/>
        </authorList>
    </citation>
    <scope>NUCLEOTIDE SEQUENCE [LARGE SCALE GENOMIC DNA]</scope>
</reference>
<organismHost>
    <name type="scientific">Homo sapiens</name>
    <name type="common">Human</name>
    <dbReference type="NCBI Taxonomy" id="9606"/>
</organismHost>
<accession>P0DSV3</accession>
<accession>P33814</accession>
<feature type="chain" id="PRO_0000099173" description="Viral late gene transcription factor 2">
    <location>
        <begin position="1"/>
        <end position="150"/>
    </location>
</feature>
<gene>
    <name type="primary">OPG126</name>
    <name type="synonym">VLTF2</name>
    <name type="ORF">A1L</name>
</gene>
<sequence>MAKRVSLPDVVISAPKAVFKPAKEEALACILPKYYKSMADMSIKTNSVIDKCWFCNQDLVFRPISIETFKGGEVGYFCSKICRDSLASMVKSHVALREEPKISLLPLVFYEDKEKVINTINLLRDKDGVYGSCYFKENSQIIDISLRSLL</sequence>
<protein>
    <recommendedName>
        <fullName>Viral late gene transcription factor 2</fullName>
        <shortName>VLTF-2</shortName>
    </recommendedName>
    <alternativeName>
        <fullName>Trans-activator protein A1</fullName>
    </alternativeName>
</protein>